<name>ILVD_VIBPA</name>
<accession>Q87KB6</accession>
<reference key="1">
    <citation type="journal article" date="2003" name="Lancet">
        <title>Genome sequence of Vibrio parahaemolyticus: a pathogenic mechanism distinct from that of V. cholerae.</title>
        <authorList>
            <person name="Makino K."/>
            <person name="Oshima K."/>
            <person name="Kurokawa K."/>
            <person name="Yokoyama K."/>
            <person name="Uda T."/>
            <person name="Tagomori K."/>
            <person name="Iijima Y."/>
            <person name="Najima M."/>
            <person name="Nakano M."/>
            <person name="Yamashita A."/>
            <person name="Kubota Y."/>
            <person name="Kimura S."/>
            <person name="Yasunaga T."/>
            <person name="Honda T."/>
            <person name="Shinagawa H."/>
            <person name="Hattori M."/>
            <person name="Iida T."/>
        </authorList>
    </citation>
    <scope>NUCLEOTIDE SEQUENCE [LARGE SCALE GENOMIC DNA]</scope>
    <source>
        <strain>RIMD 2210633</strain>
    </source>
</reference>
<dbReference type="EC" id="4.2.1.9" evidence="1"/>
<dbReference type="EMBL" id="BA000031">
    <property type="protein sequence ID" value="BAC61324.1"/>
    <property type="molecule type" value="Genomic_DNA"/>
</dbReference>
<dbReference type="RefSeq" id="NP_799440.1">
    <property type="nucleotide sequence ID" value="NC_004603.1"/>
</dbReference>
<dbReference type="RefSeq" id="WP_005481171.1">
    <property type="nucleotide sequence ID" value="NC_004603.1"/>
</dbReference>
<dbReference type="SMR" id="Q87KB6"/>
<dbReference type="GeneID" id="1190660"/>
<dbReference type="KEGG" id="vpa:VP3061"/>
<dbReference type="PATRIC" id="fig|223926.6.peg.2947"/>
<dbReference type="eggNOG" id="COG0129">
    <property type="taxonomic scope" value="Bacteria"/>
</dbReference>
<dbReference type="HOGENOM" id="CLU_014271_4_2_6"/>
<dbReference type="UniPathway" id="UPA00047">
    <property type="reaction ID" value="UER00057"/>
</dbReference>
<dbReference type="UniPathway" id="UPA00049">
    <property type="reaction ID" value="UER00061"/>
</dbReference>
<dbReference type="Proteomes" id="UP000002493">
    <property type="component" value="Chromosome 1"/>
</dbReference>
<dbReference type="GO" id="GO:0005829">
    <property type="term" value="C:cytosol"/>
    <property type="evidence" value="ECO:0007669"/>
    <property type="project" value="TreeGrafter"/>
</dbReference>
<dbReference type="GO" id="GO:0051537">
    <property type="term" value="F:2 iron, 2 sulfur cluster binding"/>
    <property type="evidence" value="ECO:0007669"/>
    <property type="project" value="UniProtKB-UniRule"/>
</dbReference>
<dbReference type="GO" id="GO:0004160">
    <property type="term" value="F:dihydroxy-acid dehydratase activity"/>
    <property type="evidence" value="ECO:0007669"/>
    <property type="project" value="UniProtKB-UniRule"/>
</dbReference>
<dbReference type="GO" id="GO:0000287">
    <property type="term" value="F:magnesium ion binding"/>
    <property type="evidence" value="ECO:0007669"/>
    <property type="project" value="UniProtKB-UniRule"/>
</dbReference>
<dbReference type="GO" id="GO:0009097">
    <property type="term" value="P:isoleucine biosynthetic process"/>
    <property type="evidence" value="ECO:0007669"/>
    <property type="project" value="UniProtKB-UniRule"/>
</dbReference>
<dbReference type="GO" id="GO:0009099">
    <property type="term" value="P:L-valine biosynthetic process"/>
    <property type="evidence" value="ECO:0007669"/>
    <property type="project" value="UniProtKB-UniRule"/>
</dbReference>
<dbReference type="FunFam" id="3.50.30.80:FF:000001">
    <property type="entry name" value="Dihydroxy-acid dehydratase"/>
    <property type="match status" value="1"/>
</dbReference>
<dbReference type="Gene3D" id="3.50.30.80">
    <property type="entry name" value="IlvD/EDD C-terminal domain-like"/>
    <property type="match status" value="1"/>
</dbReference>
<dbReference type="HAMAP" id="MF_00012">
    <property type="entry name" value="IlvD"/>
    <property type="match status" value="1"/>
</dbReference>
<dbReference type="InterPro" id="IPR042096">
    <property type="entry name" value="Dihydro-acid_dehy_C"/>
</dbReference>
<dbReference type="InterPro" id="IPR004404">
    <property type="entry name" value="DihydroxyA_deHydtase"/>
</dbReference>
<dbReference type="InterPro" id="IPR020558">
    <property type="entry name" value="DiOHA_6PGluconate_deHydtase_CS"/>
</dbReference>
<dbReference type="InterPro" id="IPR056740">
    <property type="entry name" value="ILV_EDD_C"/>
</dbReference>
<dbReference type="InterPro" id="IPR000581">
    <property type="entry name" value="ILV_EDD_N"/>
</dbReference>
<dbReference type="InterPro" id="IPR037237">
    <property type="entry name" value="IlvD/EDD_N"/>
</dbReference>
<dbReference type="NCBIfam" id="TIGR00110">
    <property type="entry name" value="ilvD"/>
    <property type="match status" value="1"/>
</dbReference>
<dbReference type="NCBIfam" id="NF009103">
    <property type="entry name" value="PRK12448.1"/>
    <property type="match status" value="1"/>
</dbReference>
<dbReference type="PANTHER" id="PTHR43661">
    <property type="entry name" value="D-XYLONATE DEHYDRATASE"/>
    <property type="match status" value="1"/>
</dbReference>
<dbReference type="PANTHER" id="PTHR43661:SF3">
    <property type="entry name" value="D-XYLONATE DEHYDRATASE YAGF-RELATED"/>
    <property type="match status" value="1"/>
</dbReference>
<dbReference type="Pfam" id="PF24877">
    <property type="entry name" value="ILV_EDD_C"/>
    <property type="match status" value="1"/>
</dbReference>
<dbReference type="Pfam" id="PF00920">
    <property type="entry name" value="ILVD_EDD_N"/>
    <property type="match status" value="1"/>
</dbReference>
<dbReference type="SUPFAM" id="SSF143975">
    <property type="entry name" value="IlvD/EDD N-terminal domain-like"/>
    <property type="match status" value="1"/>
</dbReference>
<dbReference type="SUPFAM" id="SSF52016">
    <property type="entry name" value="LeuD/IlvD-like"/>
    <property type="match status" value="1"/>
</dbReference>
<dbReference type="PROSITE" id="PS00886">
    <property type="entry name" value="ILVD_EDD_1"/>
    <property type="match status" value="1"/>
</dbReference>
<dbReference type="PROSITE" id="PS00887">
    <property type="entry name" value="ILVD_EDD_2"/>
    <property type="match status" value="1"/>
</dbReference>
<comment type="function">
    <text evidence="1">Functions in the biosynthesis of branched-chain amino acids. Catalyzes the dehydration of (2R,3R)-2,3-dihydroxy-3-methylpentanoate (2,3-dihydroxy-3-methylvalerate) into 2-oxo-3-methylpentanoate (2-oxo-3-methylvalerate) and of (2R)-2,3-dihydroxy-3-methylbutanoate (2,3-dihydroxyisovalerate) into 2-oxo-3-methylbutanoate (2-oxoisovalerate), the penultimate precursor to L-isoleucine and L-valine, respectively.</text>
</comment>
<comment type="catalytic activity">
    <reaction evidence="1">
        <text>(2R)-2,3-dihydroxy-3-methylbutanoate = 3-methyl-2-oxobutanoate + H2O</text>
        <dbReference type="Rhea" id="RHEA:24809"/>
        <dbReference type="ChEBI" id="CHEBI:11851"/>
        <dbReference type="ChEBI" id="CHEBI:15377"/>
        <dbReference type="ChEBI" id="CHEBI:49072"/>
        <dbReference type="EC" id="4.2.1.9"/>
    </reaction>
    <physiologicalReaction direction="left-to-right" evidence="1">
        <dbReference type="Rhea" id="RHEA:24810"/>
    </physiologicalReaction>
</comment>
<comment type="catalytic activity">
    <reaction evidence="1">
        <text>(2R,3R)-2,3-dihydroxy-3-methylpentanoate = (S)-3-methyl-2-oxopentanoate + H2O</text>
        <dbReference type="Rhea" id="RHEA:27694"/>
        <dbReference type="ChEBI" id="CHEBI:15377"/>
        <dbReference type="ChEBI" id="CHEBI:35146"/>
        <dbReference type="ChEBI" id="CHEBI:49258"/>
        <dbReference type="EC" id="4.2.1.9"/>
    </reaction>
    <physiologicalReaction direction="left-to-right" evidence="1">
        <dbReference type="Rhea" id="RHEA:27695"/>
    </physiologicalReaction>
</comment>
<comment type="cofactor">
    <cofactor evidence="1">
        <name>[2Fe-2S] cluster</name>
        <dbReference type="ChEBI" id="CHEBI:190135"/>
    </cofactor>
    <text evidence="1">Binds 1 [2Fe-2S] cluster per subunit. This cluster acts as a Lewis acid cofactor.</text>
</comment>
<comment type="cofactor">
    <cofactor evidence="1">
        <name>Mg(2+)</name>
        <dbReference type="ChEBI" id="CHEBI:18420"/>
    </cofactor>
</comment>
<comment type="pathway">
    <text evidence="1">Amino-acid biosynthesis; L-isoleucine biosynthesis; L-isoleucine from 2-oxobutanoate: step 3/4.</text>
</comment>
<comment type="pathway">
    <text evidence="1">Amino-acid biosynthesis; L-valine biosynthesis; L-valine from pyruvate: step 3/4.</text>
</comment>
<comment type="subunit">
    <text evidence="1">Homodimer.</text>
</comment>
<comment type="similarity">
    <text evidence="1">Belongs to the IlvD/Edd family.</text>
</comment>
<protein>
    <recommendedName>
        <fullName evidence="1">Dihydroxy-acid dehydratase</fullName>
        <shortName evidence="1">DAD</shortName>
        <ecNumber evidence="1">4.2.1.9</ecNumber>
    </recommendedName>
</protein>
<organism>
    <name type="scientific">Vibrio parahaemolyticus serotype O3:K6 (strain RIMD 2210633)</name>
    <dbReference type="NCBI Taxonomy" id="223926"/>
    <lineage>
        <taxon>Bacteria</taxon>
        <taxon>Pseudomonadati</taxon>
        <taxon>Pseudomonadota</taxon>
        <taxon>Gammaproteobacteria</taxon>
        <taxon>Vibrionales</taxon>
        <taxon>Vibrionaceae</taxon>
        <taxon>Vibrio</taxon>
    </lineage>
</organism>
<proteinExistence type="inferred from homology"/>
<sequence length="613" mass="65647">MPKYRSATTTHGRNMAGARALWRATGVKDEDFGKPIIAVVNSFTQFVPGHVHLKDLGQLVAQEIEAAGGIAKEFNTIAVDDGIAMGHGGMLYSLPSRELIADSVEYMVNAHCADAMVCISNCDKITPGMLMASMRLNIPVIFVSGGPMEAGKTKLSDQIIKLDLVDAMIQGADPKVSDEQSEQIERSACPTCGSCSGMFTANSMNCLTEALGLSQPGNGSLLATHADRKELFINAGKRIVELTKRYYEQDDETALPRNIATKAAFENAMALDIAMGGSTNTVLHLLAAAQEGEVDFDMTDIDRMSRQVPHLCKVAPSTQKYHMEDVHRAGGVVGILGELNRAGLLHNQSKTVLGLTWEEQLAKYDIMLTDSEEVKSFYRAGPAGIRTTQAFSQDCRWDTLDDDRAEGCIRTKENAFSQDGGLAVLKGNIALDGCIVKTAGVDESILKFTGPAVVFESQEDAVDGILGGKVKAGDVVVIRYEGPKGGPGMQEMLYPTTYLKSMGLGKECALLTDGRFSGGTSGLSIGHASPEAANGGAIGLVQDGDLIAIDIPNRSISLEISEQELAERRVKQDELGWKPANRQREVSFALKAYASMATSADKGAVRDKSKLEG</sequence>
<gene>
    <name evidence="1" type="primary">ilvD</name>
    <name type="ordered locus">VP3061</name>
</gene>
<feature type="chain" id="PRO_0000103527" description="Dihydroxy-acid dehydratase">
    <location>
        <begin position="1"/>
        <end position="613"/>
    </location>
</feature>
<feature type="active site" description="Proton acceptor" evidence="1">
    <location>
        <position position="517"/>
    </location>
</feature>
<feature type="binding site" evidence="1">
    <location>
        <position position="81"/>
    </location>
    <ligand>
        <name>Mg(2+)</name>
        <dbReference type="ChEBI" id="CHEBI:18420"/>
    </ligand>
</feature>
<feature type="binding site" evidence="1">
    <location>
        <position position="122"/>
    </location>
    <ligand>
        <name>[2Fe-2S] cluster</name>
        <dbReference type="ChEBI" id="CHEBI:190135"/>
    </ligand>
</feature>
<feature type="binding site" evidence="1">
    <location>
        <position position="123"/>
    </location>
    <ligand>
        <name>Mg(2+)</name>
        <dbReference type="ChEBI" id="CHEBI:18420"/>
    </ligand>
</feature>
<feature type="binding site" description="via carbamate group" evidence="1">
    <location>
        <position position="124"/>
    </location>
    <ligand>
        <name>Mg(2+)</name>
        <dbReference type="ChEBI" id="CHEBI:18420"/>
    </ligand>
</feature>
<feature type="binding site" evidence="1">
    <location>
        <position position="195"/>
    </location>
    <ligand>
        <name>[2Fe-2S] cluster</name>
        <dbReference type="ChEBI" id="CHEBI:190135"/>
    </ligand>
</feature>
<feature type="binding site" evidence="1">
    <location>
        <position position="491"/>
    </location>
    <ligand>
        <name>Mg(2+)</name>
        <dbReference type="ChEBI" id="CHEBI:18420"/>
    </ligand>
</feature>
<feature type="modified residue" description="N6-carboxylysine" evidence="1">
    <location>
        <position position="124"/>
    </location>
</feature>
<evidence type="ECO:0000255" key="1">
    <source>
        <dbReference type="HAMAP-Rule" id="MF_00012"/>
    </source>
</evidence>
<keyword id="KW-0001">2Fe-2S</keyword>
<keyword id="KW-0028">Amino-acid biosynthesis</keyword>
<keyword id="KW-0100">Branched-chain amino acid biosynthesis</keyword>
<keyword id="KW-0408">Iron</keyword>
<keyword id="KW-0411">Iron-sulfur</keyword>
<keyword id="KW-0456">Lyase</keyword>
<keyword id="KW-0460">Magnesium</keyword>
<keyword id="KW-0479">Metal-binding</keyword>